<reference key="1">
    <citation type="journal article" date="2003" name="Lancet">
        <title>Genome sequence of Vibrio parahaemolyticus: a pathogenic mechanism distinct from that of V. cholerae.</title>
        <authorList>
            <person name="Makino K."/>
            <person name="Oshima K."/>
            <person name="Kurokawa K."/>
            <person name="Yokoyama K."/>
            <person name="Uda T."/>
            <person name="Tagomori K."/>
            <person name="Iijima Y."/>
            <person name="Najima M."/>
            <person name="Nakano M."/>
            <person name="Yamashita A."/>
            <person name="Kubota Y."/>
            <person name="Kimura S."/>
            <person name="Yasunaga T."/>
            <person name="Honda T."/>
            <person name="Shinagawa H."/>
            <person name="Hattori M."/>
            <person name="Iida T."/>
        </authorList>
    </citation>
    <scope>NUCLEOTIDE SEQUENCE [LARGE SCALE GENOMIC DNA]</scope>
    <source>
        <strain>RIMD 2210633</strain>
    </source>
</reference>
<sequence>MTAQNIDGTLISQTVRSEVAARVKARVAAGLRAPGLAVVLVGEDPASQVYVGSKRRACEEVGFVSKSFDLPASTSEEELLALIDELNNDNEIDGILVQLPLPAGIDTTHVLERIHPEKDVDGFHPYNVGRLAQRIPKLRSCTPKGIITLLDRYNIELRGKHAVVVGASNIVGRPMTLELLLAGCTTTTCHRFTKDLESHVRQADVVVVAVGKPNFIPGEWIKKGAVVVDVGINRLDSGKLVGDVEYDKARESASFITPVPGGVGPMTVASLIENTMLACEQFHTEQ</sequence>
<evidence type="ECO:0000255" key="1">
    <source>
        <dbReference type="HAMAP-Rule" id="MF_01576"/>
    </source>
</evidence>
<dbReference type="EC" id="1.5.1.5" evidence="1"/>
<dbReference type="EC" id="3.5.4.9" evidence="1"/>
<dbReference type="EMBL" id="BA000031">
    <property type="protein sequence ID" value="BAC59142.1"/>
    <property type="molecule type" value="Genomic_DNA"/>
</dbReference>
<dbReference type="RefSeq" id="NP_797258.1">
    <property type="nucleotide sequence ID" value="NC_004603.1"/>
</dbReference>
<dbReference type="RefSeq" id="WP_005460545.1">
    <property type="nucleotide sequence ID" value="NC_004603.1"/>
</dbReference>
<dbReference type="SMR" id="Q87RB8"/>
<dbReference type="GeneID" id="1188376"/>
<dbReference type="KEGG" id="vpa:VP0879"/>
<dbReference type="PATRIC" id="fig|223926.6.peg.832"/>
<dbReference type="eggNOG" id="COG0190">
    <property type="taxonomic scope" value="Bacteria"/>
</dbReference>
<dbReference type="HOGENOM" id="CLU_034045_2_1_6"/>
<dbReference type="UniPathway" id="UPA00193"/>
<dbReference type="Proteomes" id="UP000002493">
    <property type="component" value="Chromosome 1"/>
</dbReference>
<dbReference type="GO" id="GO:0005829">
    <property type="term" value="C:cytosol"/>
    <property type="evidence" value="ECO:0007669"/>
    <property type="project" value="TreeGrafter"/>
</dbReference>
<dbReference type="GO" id="GO:0004477">
    <property type="term" value="F:methenyltetrahydrofolate cyclohydrolase activity"/>
    <property type="evidence" value="ECO:0007669"/>
    <property type="project" value="UniProtKB-UniRule"/>
</dbReference>
<dbReference type="GO" id="GO:0004488">
    <property type="term" value="F:methylenetetrahydrofolate dehydrogenase (NADP+) activity"/>
    <property type="evidence" value="ECO:0007669"/>
    <property type="project" value="UniProtKB-UniRule"/>
</dbReference>
<dbReference type="GO" id="GO:0000105">
    <property type="term" value="P:L-histidine biosynthetic process"/>
    <property type="evidence" value="ECO:0007669"/>
    <property type="project" value="UniProtKB-KW"/>
</dbReference>
<dbReference type="GO" id="GO:0009086">
    <property type="term" value="P:methionine biosynthetic process"/>
    <property type="evidence" value="ECO:0007669"/>
    <property type="project" value="UniProtKB-KW"/>
</dbReference>
<dbReference type="GO" id="GO:0006164">
    <property type="term" value="P:purine nucleotide biosynthetic process"/>
    <property type="evidence" value="ECO:0007669"/>
    <property type="project" value="UniProtKB-KW"/>
</dbReference>
<dbReference type="GO" id="GO:0035999">
    <property type="term" value="P:tetrahydrofolate interconversion"/>
    <property type="evidence" value="ECO:0007669"/>
    <property type="project" value="UniProtKB-UniRule"/>
</dbReference>
<dbReference type="CDD" id="cd01080">
    <property type="entry name" value="NAD_bind_m-THF_DH_Cyclohyd"/>
    <property type="match status" value="1"/>
</dbReference>
<dbReference type="FunFam" id="3.40.50.10860:FF:000001">
    <property type="entry name" value="Bifunctional protein FolD"/>
    <property type="match status" value="1"/>
</dbReference>
<dbReference type="FunFam" id="3.40.50.720:FF:000006">
    <property type="entry name" value="Bifunctional protein FolD"/>
    <property type="match status" value="1"/>
</dbReference>
<dbReference type="Gene3D" id="3.40.50.10860">
    <property type="entry name" value="Leucine Dehydrogenase, chain A, domain 1"/>
    <property type="match status" value="1"/>
</dbReference>
<dbReference type="Gene3D" id="3.40.50.720">
    <property type="entry name" value="NAD(P)-binding Rossmann-like Domain"/>
    <property type="match status" value="1"/>
</dbReference>
<dbReference type="HAMAP" id="MF_01576">
    <property type="entry name" value="THF_DHG_CYH"/>
    <property type="match status" value="1"/>
</dbReference>
<dbReference type="InterPro" id="IPR046346">
    <property type="entry name" value="Aminoacid_DH-like_N_sf"/>
</dbReference>
<dbReference type="InterPro" id="IPR036291">
    <property type="entry name" value="NAD(P)-bd_dom_sf"/>
</dbReference>
<dbReference type="InterPro" id="IPR000672">
    <property type="entry name" value="THF_DH/CycHdrlase"/>
</dbReference>
<dbReference type="InterPro" id="IPR020630">
    <property type="entry name" value="THF_DH/CycHdrlase_cat_dom"/>
</dbReference>
<dbReference type="InterPro" id="IPR020867">
    <property type="entry name" value="THF_DH/CycHdrlase_CS"/>
</dbReference>
<dbReference type="InterPro" id="IPR020631">
    <property type="entry name" value="THF_DH/CycHdrlase_NAD-bd_dom"/>
</dbReference>
<dbReference type="NCBIfam" id="NF008058">
    <property type="entry name" value="PRK10792.1"/>
    <property type="match status" value="1"/>
</dbReference>
<dbReference type="NCBIfam" id="NF010783">
    <property type="entry name" value="PRK14186.1"/>
    <property type="match status" value="1"/>
</dbReference>
<dbReference type="PANTHER" id="PTHR48099:SF5">
    <property type="entry name" value="C-1-TETRAHYDROFOLATE SYNTHASE, CYTOPLASMIC"/>
    <property type="match status" value="1"/>
</dbReference>
<dbReference type="PANTHER" id="PTHR48099">
    <property type="entry name" value="C-1-TETRAHYDROFOLATE SYNTHASE, CYTOPLASMIC-RELATED"/>
    <property type="match status" value="1"/>
</dbReference>
<dbReference type="Pfam" id="PF00763">
    <property type="entry name" value="THF_DHG_CYH"/>
    <property type="match status" value="1"/>
</dbReference>
<dbReference type="Pfam" id="PF02882">
    <property type="entry name" value="THF_DHG_CYH_C"/>
    <property type="match status" value="1"/>
</dbReference>
<dbReference type="PRINTS" id="PR00085">
    <property type="entry name" value="THFDHDRGNASE"/>
</dbReference>
<dbReference type="SUPFAM" id="SSF53223">
    <property type="entry name" value="Aminoacid dehydrogenase-like, N-terminal domain"/>
    <property type="match status" value="1"/>
</dbReference>
<dbReference type="SUPFAM" id="SSF51735">
    <property type="entry name" value="NAD(P)-binding Rossmann-fold domains"/>
    <property type="match status" value="1"/>
</dbReference>
<dbReference type="PROSITE" id="PS00766">
    <property type="entry name" value="THF_DHG_CYH_1"/>
    <property type="match status" value="1"/>
</dbReference>
<dbReference type="PROSITE" id="PS00767">
    <property type="entry name" value="THF_DHG_CYH_2"/>
    <property type="match status" value="1"/>
</dbReference>
<accession>Q87RB8</accession>
<comment type="function">
    <text evidence="1">Catalyzes the oxidation of 5,10-methylenetetrahydrofolate to 5,10-methenyltetrahydrofolate and then the hydrolysis of 5,10-methenyltetrahydrofolate to 10-formyltetrahydrofolate.</text>
</comment>
<comment type="catalytic activity">
    <reaction evidence="1">
        <text>(6R)-5,10-methylene-5,6,7,8-tetrahydrofolate + NADP(+) = (6R)-5,10-methenyltetrahydrofolate + NADPH</text>
        <dbReference type="Rhea" id="RHEA:22812"/>
        <dbReference type="ChEBI" id="CHEBI:15636"/>
        <dbReference type="ChEBI" id="CHEBI:57455"/>
        <dbReference type="ChEBI" id="CHEBI:57783"/>
        <dbReference type="ChEBI" id="CHEBI:58349"/>
        <dbReference type="EC" id="1.5.1.5"/>
    </reaction>
</comment>
<comment type="catalytic activity">
    <reaction evidence="1">
        <text>(6R)-5,10-methenyltetrahydrofolate + H2O = (6R)-10-formyltetrahydrofolate + H(+)</text>
        <dbReference type="Rhea" id="RHEA:23700"/>
        <dbReference type="ChEBI" id="CHEBI:15377"/>
        <dbReference type="ChEBI" id="CHEBI:15378"/>
        <dbReference type="ChEBI" id="CHEBI:57455"/>
        <dbReference type="ChEBI" id="CHEBI:195366"/>
        <dbReference type="EC" id="3.5.4.9"/>
    </reaction>
</comment>
<comment type="pathway">
    <text evidence="1">One-carbon metabolism; tetrahydrofolate interconversion.</text>
</comment>
<comment type="subunit">
    <text evidence="1">Homodimer.</text>
</comment>
<comment type="similarity">
    <text evidence="1">Belongs to the tetrahydrofolate dehydrogenase/cyclohydrolase family.</text>
</comment>
<protein>
    <recommendedName>
        <fullName evidence="1">Bifunctional protein FolD</fullName>
    </recommendedName>
    <domain>
        <recommendedName>
            <fullName evidence="1">Methylenetetrahydrofolate dehydrogenase</fullName>
            <ecNumber evidence="1">1.5.1.5</ecNumber>
        </recommendedName>
    </domain>
    <domain>
        <recommendedName>
            <fullName evidence="1">Methenyltetrahydrofolate cyclohydrolase</fullName>
            <ecNumber evidence="1">3.5.4.9</ecNumber>
        </recommendedName>
    </domain>
</protein>
<organism>
    <name type="scientific">Vibrio parahaemolyticus serotype O3:K6 (strain RIMD 2210633)</name>
    <dbReference type="NCBI Taxonomy" id="223926"/>
    <lineage>
        <taxon>Bacteria</taxon>
        <taxon>Pseudomonadati</taxon>
        <taxon>Pseudomonadota</taxon>
        <taxon>Gammaproteobacteria</taxon>
        <taxon>Vibrionales</taxon>
        <taxon>Vibrionaceae</taxon>
        <taxon>Vibrio</taxon>
    </lineage>
</organism>
<name>FOLD_VIBPA</name>
<gene>
    <name evidence="1" type="primary">folD</name>
    <name type="ordered locus">VP0879</name>
</gene>
<feature type="chain" id="PRO_0000268558" description="Bifunctional protein FolD">
    <location>
        <begin position="1"/>
        <end position="286"/>
    </location>
</feature>
<feature type="binding site" evidence="1">
    <location>
        <begin position="166"/>
        <end position="168"/>
    </location>
    <ligand>
        <name>NADP(+)</name>
        <dbReference type="ChEBI" id="CHEBI:58349"/>
    </ligand>
</feature>
<feature type="binding site" evidence="1">
    <location>
        <position position="232"/>
    </location>
    <ligand>
        <name>NADP(+)</name>
        <dbReference type="ChEBI" id="CHEBI:58349"/>
    </ligand>
</feature>
<keyword id="KW-0028">Amino-acid biosynthesis</keyword>
<keyword id="KW-0368">Histidine biosynthesis</keyword>
<keyword id="KW-0378">Hydrolase</keyword>
<keyword id="KW-0486">Methionine biosynthesis</keyword>
<keyword id="KW-0511">Multifunctional enzyme</keyword>
<keyword id="KW-0521">NADP</keyword>
<keyword id="KW-0554">One-carbon metabolism</keyword>
<keyword id="KW-0560">Oxidoreductase</keyword>
<keyword id="KW-0658">Purine biosynthesis</keyword>
<proteinExistence type="inferred from homology"/>